<accession>A1TSP8</accession>
<name>RL33_PARC0</name>
<feature type="chain" id="PRO_1000004132" description="Large ribosomal subunit protein bL33">
    <location>
        <begin position="1"/>
        <end position="56"/>
    </location>
</feature>
<feature type="region of interest" description="Disordered" evidence="2">
    <location>
        <begin position="1"/>
        <end position="24"/>
    </location>
</feature>
<feature type="compositionally biased region" description="Basic and acidic residues" evidence="2">
    <location>
        <begin position="1"/>
        <end position="12"/>
    </location>
</feature>
<feature type="compositionally biased region" description="Polar residues" evidence="2">
    <location>
        <begin position="15"/>
        <end position="24"/>
    </location>
</feature>
<proteinExistence type="inferred from homology"/>
<organism>
    <name type="scientific">Paracidovorax citrulli (strain AAC00-1)</name>
    <name type="common">Acidovorax citrulli</name>
    <dbReference type="NCBI Taxonomy" id="397945"/>
    <lineage>
        <taxon>Bacteria</taxon>
        <taxon>Pseudomonadati</taxon>
        <taxon>Pseudomonadota</taxon>
        <taxon>Betaproteobacteria</taxon>
        <taxon>Burkholderiales</taxon>
        <taxon>Comamonadaceae</taxon>
        <taxon>Paracidovorax</taxon>
    </lineage>
</organism>
<evidence type="ECO:0000255" key="1">
    <source>
        <dbReference type="HAMAP-Rule" id="MF_00294"/>
    </source>
</evidence>
<evidence type="ECO:0000256" key="2">
    <source>
        <dbReference type="SAM" id="MobiDB-lite"/>
    </source>
</evidence>
<evidence type="ECO:0000305" key="3"/>
<sequence>MATKGGRDKIKLESTAGTGHFYTTTKNKKTMPEKMSIIKFDPKARKHVEYKEMKLK</sequence>
<keyword id="KW-0687">Ribonucleoprotein</keyword>
<keyword id="KW-0689">Ribosomal protein</keyword>
<protein>
    <recommendedName>
        <fullName evidence="1">Large ribosomal subunit protein bL33</fullName>
    </recommendedName>
    <alternativeName>
        <fullName evidence="3">50S ribosomal protein L33</fullName>
    </alternativeName>
</protein>
<reference key="1">
    <citation type="submission" date="2006-12" db="EMBL/GenBank/DDBJ databases">
        <title>Complete sequence of Acidovorax avenae subsp. citrulli AAC00-1.</title>
        <authorList>
            <person name="Copeland A."/>
            <person name="Lucas S."/>
            <person name="Lapidus A."/>
            <person name="Barry K."/>
            <person name="Detter J.C."/>
            <person name="Glavina del Rio T."/>
            <person name="Dalin E."/>
            <person name="Tice H."/>
            <person name="Pitluck S."/>
            <person name="Kiss H."/>
            <person name="Brettin T."/>
            <person name="Bruce D."/>
            <person name="Han C."/>
            <person name="Tapia R."/>
            <person name="Gilna P."/>
            <person name="Schmutz J."/>
            <person name="Larimer F."/>
            <person name="Land M."/>
            <person name="Hauser L."/>
            <person name="Kyrpides N."/>
            <person name="Kim E."/>
            <person name="Stahl D."/>
            <person name="Richardson P."/>
        </authorList>
    </citation>
    <scope>NUCLEOTIDE SEQUENCE [LARGE SCALE GENOMIC DNA]</scope>
    <source>
        <strain>AAC00-1</strain>
    </source>
</reference>
<comment type="similarity">
    <text evidence="1">Belongs to the bacterial ribosomal protein bL33 family.</text>
</comment>
<gene>
    <name evidence="1" type="primary">rpmG</name>
    <name type="ordered locus">Aave_3429</name>
</gene>
<dbReference type="EMBL" id="CP000512">
    <property type="protein sequence ID" value="ABM33986.1"/>
    <property type="molecule type" value="Genomic_DNA"/>
</dbReference>
<dbReference type="RefSeq" id="WP_011796484.1">
    <property type="nucleotide sequence ID" value="NC_008752.1"/>
</dbReference>
<dbReference type="SMR" id="A1TSP8"/>
<dbReference type="STRING" id="397945.Aave_3429"/>
<dbReference type="GeneID" id="79791684"/>
<dbReference type="KEGG" id="aav:Aave_3429"/>
<dbReference type="eggNOG" id="COG0267">
    <property type="taxonomic scope" value="Bacteria"/>
</dbReference>
<dbReference type="HOGENOM" id="CLU_190949_1_1_4"/>
<dbReference type="OrthoDB" id="21586at2"/>
<dbReference type="Proteomes" id="UP000002596">
    <property type="component" value="Chromosome"/>
</dbReference>
<dbReference type="GO" id="GO:0022625">
    <property type="term" value="C:cytosolic large ribosomal subunit"/>
    <property type="evidence" value="ECO:0007669"/>
    <property type="project" value="TreeGrafter"/>
</dbReference>
<dbReference type="GO" id="GO:0003735">
    <property type="term" value="F:structural constituent of ribosome"/>
    <property type="evidence" value="ECO:0007669"/>
    <property type="project" value="InterPro"/>
</dbReference>
<dbReference type="GO" id="GO:0006412">
    <property type="term" value="P:translation"/>
    <property type="evidence" value="ECO:0007669"/>
    <property type="project" value="UniProtKB-UniRule"/>
</dbReference>
<dbReference type="Gene3D" id="2.20.28.120">
    <property type="entry name" value="Ribosomal protein L33"/>
    <property type="match status" value="1"/>
</dbReference>
<dbReference type="HAMAP" id="MF_00294">
    <property type="entry name" value="Ribosomal_bL33"/>
    <property type="match status" value="1"/>
</dbReference>
<dbReference type="InterPro" id="IPR001705">
    <property type="entry name" value="Ribosomal_bL33"/>
</dbReference>
<dbReference type="InterPro" id="IPR018264">
    <property type="entry name" value="Ribosomal_bL33_CS"/>
</dbReference>
<dbReference type="InterPro" id="IPR038584">
    <property type="entry name" value="Ribosomal_bL33_sf"/>
</dbReference>
<dbReference type="InterPro" id="IPR011332">
    <property type="entry name" value="Ribosomal_zn-bd"/>
</dbReference>
<dbReference type="NCBIfam" id="NF001860">
    <property type="entry name" value="PRK00595.1"/>
    <property type="match status" value="1"/>
</dbReference>
<dbReference type="NCBIfam" id="TIGR01023">
    <property type="entry name" value="rpmG_bact"/>
    <property type="match status" value="1"/>
</dbReference>
<dbReference type="PANTHER" id="PTHR15238">
    <property type="entry name" value="54S RIBOSOMAL PROTEIN L39, MITOCHONDRIAL"/>
    <property type="match status" value="1"/>
</dbReference>
<dbReference type="PANTHER" id="PTHR15238:SF1">
    <property type="entry name" value="LARGE RIBOSOMAL SUBUNIT PROTEIN BL33M"/>
    <property type="match status" value="1"/>
</dbReference>
<dbReference type="Pfam" id="PF00471">
    <property type="entry name" value="Ribosomal_L33"/>
    <property type="match status" value="1"/>
</dbReference>
<dbReference type="SUPFAM" id="SSF57829">
    <property type="entry name" value="Zn-binding ribosomal proteins"/>
    <property type="match status" value="1"/>
</dbReference>
<dbReference type="PROSITE" id="PS00582">
    <property type="entry name" value="RIBOSOMAL_L33"/>
    <property type="match status" value="1"/>
</dbReference>